<comment type="function">
    <text evidence="1">Catalyzes the condensation of pantoate with beta-alanine in an ATP-dependent reaction via a pantoyl-adenylate intermediate.</text>
</comment>
<comment type="catalytic activity">
    <reaction evidence="1">
        <text>(R)-pantoate + beta-alanine + ATP = (R)-pantothenate + AMP + diphosphate + H(+)</text>
        <dbReference type="Rhea" id="RHEA:10912"/>
        <dbReference type="ChEBI" id="CHEBI:15378"/>
        <dbReference type="ChEBI" id="CHEBI:15980"/>
        <dbReference type="ChEBI" id="CHEBI:29032"/>
        <dbReference type="ChEBI" id="CHEBI:30616"/>
        <dbReference type="ChEBI" id="CHEBI:33019"/>
        <dbReference type="ChEBI" id="CHEBI:57966"/>
        <dbReference type="ChEBI" id="CHEBI:456215"/>
        <dbReference type="EC" id="6.3.2.1"/>
    </reaction>
</comment>
<comment type="pathway">
    <text evidence="1">Cofactor biosynthesis; (R)-pantothenate biosynthesis; (R)-pantothenate from (R)-pantoate and beta-alanine: step 1/1.</text>
</comment>
<comment type="subunit">
    <text evidence="1">Homodimer.</text>
</comment>
<comment type="subcellular location">
    <subcellularLocation>
        <location evidence="1">Cytoplasm</location>
    </subcellularLocation>
</comment>
<comment type="miscellaneous">
    <text evidence="1">The reaction proceeds by a bi uni uni bi ping pong mechanism.</text>
</comment>
<comment type="similarity">
    <text evidence="1">Belongs to the pantothenate synthetase family.</text>
</comment>
<reference key="1">
    <citation type="journal article" date="2003" name="J. Bacteriol.">
        <title>Comparative analyses of the complete genome sequences of Pierce's disease and citrus variegated chlorosis strains of Xylella fastidiosa.</title>
        <authorList>
            <person name="Van Sluys M.A."/>
            <person name="de Oliveira M.C."/>
            <person name="Monteiro-Vitorello C.B."/>
            <person name="Miyaki C.Y."/>
            <person name="Furlan L.R."/>
            <person name="Camargo L.E.A."/>
            <person name="da Silva A.C.R."/>
            <person name="Moon D.H."/>
            <person name="Takita M.A."/>
            <person name="Lemos E.G.M."/>
            <person name="Machado M.A."/>
            <person name="Ferro M.I.T."/>
            <person name="da Silva F.R."/>
            <person name="Goldman M.H.S."/>
            <person name="Goldman G.H."/>
            <person name="Lemos M.V.F."/>
            <person name="El-Dorry H."/>
            <person name="Tsai S.M."/>
            <person name="Carrer H."/>
            <person name="Carraro D.M."/>
            <person name="de Oliveira R.C."/>
            <person name="Nunes L.R."/>
            <person name="Siqueira W.J."/>
            <person name="Coutinho L.L."/>
            <person name="Kimura E.T."/>
            <person name="Ferro E.S."/>
            <person name="Harakava R."/>
            <person name="Kuramae E.E."/>
            <person name="Marino C.L."/>
            <person name="Giglioti E."/>
            <person name="Abreu I.L."/>
            <person name="Alves L.M.C."/>
            <person name="do Amaral A.M."/>
            <person name="Baia G.S."/>
            <person name="Blanco S.R."/>
            <person name="Brito M.S."/>
            <person name="Cannavan F.S."/>
            <person name="Celestino A.V."/>
            <person name="da Cunha A.F."/>
            <person name="Fenille R.C."/>
            <person name="Ferro J.A."/>
            <person name="Formighieri E.F."/>
            <person name="Kishi L.T."/>
            <person name="Leoni S.G."/>
            <person name="Oliveira A.R."/>
            <person name="Rosa V.E. Jr."/>
            <person name="Sassaki F.T."/>
            <person name="Sena J.A.D."/>
            <person name="de Souza A.A."/>
            <person name="Truffi D."/>
            <person name="Tsukumo F."/>
            <person name="Yanai G.M."/>
            <person name="Zaros L.G."/>
            <person name="Civerolo E.L."/>
            <person name="Simpson A.J.G."/>
            <person name="Almeida N.F. Jr."/>
            <person name="Setubal J.C."/>
            <person name="Kitajima J.P."/>
        </authorList>
    </citation>
    <scope>NUCLEOTIDE SEQUENCE [LARGE SCALE GENOMIC DNA]</scope>
    <source>
        <strain>Temecula1 / ATCC 700964</strain>
    </source>
</reference>
<protein>
    <recommendedName>
        <fullName evidence="1">Pantothenate synthetase</fullName>
        <shortName evidence="1">PS</shortName>
        <ecNumber evidence="1">6.3.2.1</ecNumber>
    </recommendedName>
    <alternativeName>
        <fullName evidence="1">Pantoate--beta-alanine ligase</fullName>
    </alternativeName>
    <alternativeName>
        <fullName evidence="1">Pantoate-activating enzyme</fullName>
    </alternativeName>
</protein>
<name>PANC_XYLFT</name>
<accession>Q87EV9</accession>
<sequence length="281" mass="31267">MIDTVTDLSRLRGIVADWRRQGLRVALVPTMGNLHAGHFSLVMLARHYADRVVSSVFVNPTQFGPHEDFQRYPRTPEADMRGLEHVGCDVLWLPSVETMYPLGTERTVRLFIPCVSDVLEGTFRPGHFEGVCTVVARLFNQVLPDVAVFGKKDYQQLVVIRQMVVDLAFPIEILGGCIVRESDGLAMSSRNQYLSMQQRPQAAEIHRTLIAMRDAVMSGGVHADVEAEAVRRLEAAGFQVDYAVIRLPDLCEPIDGIVISQGIALVAARLGNTRLIDNLEF</sequence>
<feature type="chain" id="PRO_0000128294" description="Pantothenate synthetase">
    <location>
        <begin position="1"/>
        <end position="281"/>
    </location>
</feature>
<feature type="active site" description="Proton donor" evidence="1">
    <location>
        <position position="38"/>
    </location>
</feature>
<feature type="binding site" evidence="1">
    <location>
        <begin position="31"/>
        <end position="38"/>
    </location>
    <ligand>
        <name>ATP</name>
        <dbReference type="ChEBI" id="CHEBI:30616"/>
    </ligand>
</feature>
<feature type="binding site" evidence="1">
    <location>
        <position position="62"/>
    </location>
    <ligand>
        <name>(R)-pantoate</name>
        <dbReference type="ChEBI" id="CHEBI:15980"/>
    </ligand>
</feature>
<feature type="binding site" evidence="1">
    <location>
        <position position="62"/>
    </location>
    <ligand>
        <name>beta-alanine</name>
        <dbReference type="ChEBI" id="CHEBI:57966"/>
    </ligand>
</feature>
<feature type="binding site" evidence="1">
    <location>
        <begin position="150"/>
        <end position="153"/>
    </location>
    <ligand>
        <name>ATP</name>
        <dbReference type="ChEBI" id="CHEBI:30616"/>
    </ligand>
</feature>
<feature type="binding site" evidence="1">
    <location>
        <position position="156"/>
    </location>
    <ligand>
        <name>(R)-pantoate</name>
        <dbReference type="ChEBI" id="CHEBI:15980"/>
    </ligand>
</feature>
<feature type="binding site" evidence="1">
    <location>
        <position position="179"/>
    </location>
    <ligand>
        <name>ATP</name>
        <dbReference type="ChEBI" id="CHEBI:30616"/>
    </ligand>
</feature>
<feature type="binding site" evidence="1">
    <location>
        <begin position="187"/>
        <end position="190"/>
    </location>
    <ligand>
        <name>ATP</name>
        <dbReference type="ChEBI" id="CHEBI:30616"/>
    </ligand>
</feature>
<evidence type="ECO:0000255" key="1">
    <source>
        <dbReference type="HAMAP-Rule" id="MF_00158"/>
    </source>
</evidence>
<dbReference type="EC" id="6.3.2.1" evidence="1"/>
<dbReference type="EMBL" id="AE009442">
    <property type="protein sequence ID" value="AAO28080.1"/>
    <property type="molecule type" value="Genomic_DNA"/>
</dbReference>
<dbReference type="RefSeq" id="WP_011097534.1">
    <property type="nucleotide sequence ID" value="NC_004556.1"/>
</dbReference>
<dbReference type="SMR" id="Q87EV9"/>
<dbReference type="GeneID" id="93903879"/>
<dbReference type="KEGG" id="xft:PD_0188"/>
<dbReference type="HOGENOM" id="CLU_047148_0_0_6"/>
<dbReference type="UniPathway" id="UPA00028">
    <property type="reaction ID" value="UER00005"/>
</dbReference>
<dbReference type="Proteomes" id="UP000002516">
    <property type="component" value="Chromosome"/>
</dbReference>
<dbReference type="GO" id="GO:0005829">
    <property type="term" value="C:cytosol"/>
    <property type="evidence" value="ECO:0007669"/>
    <property type="project" value="TreeGrafter"/>
</dbReference>
<dbReference type="GO" id="GO:0005524">
    <property type="term" value="F:ATP binding"/>
    <property type="evidence" value="ECO:0007669"/>
    <property type="project" value="UniProtKB-KW"/>
</dbReference>
<dbReference type="GO" id="GO:0004592">
    <property type="term" value="F:pantoate-beta-alanine ligase activity"/>
    <property type="evidence" value="ECO:0007669"/>
    <property type="project" value="UniProtKB-UniRule"/>
</dbReference>
<dbReference type="GO" id="GO:0015940">
    <property type="term" value="P:pantothenate biosynthetic process"/>
    <property type="evidence" value="ECO:0007669"/>
    <property type="project" value="UniProtKB-UniRule"/>
</dbReference>
<dbReference type="CDD" id="cd00560">
    <property type="entry name" value="PanC"/>
    <property type="match status" value="1"/>
</dbReference>
<dbReference type="FunFam" id="3.40.50.620:FF:000114">
    <property type="entry name" value="Pantothenate synthetase"/>
    <property type="match status" value="1"/>
</dbReference>
<dbReference type="Gene3D" id="3.40.50.620">
    <property type="entry name" value="HUPs"/>
    <property type="match status" value="1"/>
</dbReference>
<dbReference type="Gene3D" id="3.30.1300.10">
    <property type="entry name" value="Pantoate-beta-alanine ligase, C-terminal domain"/>
    <property type="match status" value="1"/>
</dbReference>
<dbReference type="HAMAP" id="MF_00158">
    <property type="entry name" value="PanC"/>
    <property type="match status" value="1"/>
</dbReference>
<dbReference type="InterPro" id="IPR003721">
    <property type="entry name" value="Pantoate_ligase"/>
</dbReference>
<dbReference type="InterPro" id="IPR042176">
    <property type="entry name" value="Pantoate_ligase_C"/>
</dbReference>
<dbReference type="InterPro" id="IPR014729">
    <property type="entry name" value="Rossmann-like_a/b/a_fold"/>
</dbReference>
<dbReference type="NCBIfam" id="TIGR00018">
    <property type="entry name" value="panC"/>
    <property type="match status" value="1"/>
</dbReference>
<dbReference type="PANTHER" id="PTHR21299">
    <property type="entry name" value="CYTIDYLATE KINASE/PANTOATE-BETA-ALANINE LIGASE"/>
    <property type="match status" value="1"/>
</dbReference>
<dbReference type="PANTHER" id="PTHR21299:SF1">
    <property type="entry name" value="PANTOATE--BETA-ALANINE LIGASE"/>
    <property type="match status" value="1"/>
</dbReference>
<dbReference type="Pfam" id="PF02569">
    <property type="entry name" value="Pantoate_ligase"/>
    <property type="match status" value="1"/>
</dbReference>
<dbReference type="SUPFAM" id="SSF52374">
    <property type="entry name" value="Nucleotidylyl transferase"/>
    <property type="match status" value="1"/>
</dbReference>
<keyword id="KW-0067">ATP-binding</keyword>
<keyword id="KW-0963">Cytoplasm</keyword>
<keyword id="KW-0436">Ligase</keyword>
<keyword id="KW-0547">Nucleotide-binding</keyword>
<keyword id="KW-0566">Pantothenate biosynthesis</keyword>
<keyword id="KW-1185">Reference proteome</keyword>
<gene>
    <name evidence="1" type="primary">panC</name>
    <name type="ordered locus">PD_0188</name>
</gene>
<proteinExistence type="inferred from homology"/>
<organism>
    <name type="scientific">Xylella fastidiosa (strain Temecula1 / ATCC 700964)</name>
    <dbReference type="NCBI Taxonomy" id="183190"/>
    <lineage>
        <taxon>Bacteria</taxon>
        <taxon>Pseudomonadati</taxon>
        <taxon>Pseudomonadota</taxon>
        <taxon>Gammaproteobacteria</taxon>
        <taxon>Lysobacterales</taxon>
        <taxon>Lysobacteraceae</taxon>
        <taxon>Xylella</taxon>
    </lineage>
</organism>